<name>MNMA_STRGG</name>
<sequence>MTQTSQRPLRVLAAMSGGVDSAVAAARAAEAGHDVTGVHLALSANPQSFRTGARGCCTIEDSRDARRAADVIGIPFYVWDLAERFREDVVEDFVAEYEAGRTPNPCLRCNEKIKFAALLDKALALGFDAVCTGHYATVVLAEDGSRELHRASDMAKDQSYVLGVLDEKQLAHAMFPLGDTLTTKDEIRAEAERRGLAVAKKPDSHDICFIADGDTQGFLANRLGGPAEGDILDESGTKLGTHEGAFGFTIGQRKGLKIGHPAPDGKPRYVLDISPVNNTVTVGPVEALDVTALTAIKPRWCGTPPSGPGTYTAQLRAHGGESEVTAELVDGTELNVTFTEPVRGVAPGQAVVLYDGTRVVGSATIATTVRRERVATGG</sequence>
<dbReference type="EC" id="2.8.1.13" evidence="1"/>
<dbReference type="EMBL" id="AP009493">
    <property type="protein sequence ID" value="BAG18856.1"/>
    <property type="molecule type" value="Genomic_DNA"/>
</dbReference>
<dbReference type="RefSeq" id="WP_003966102.1">
    <property type="nucleotide sequence ID" value="NC_010572.1"/>
</dbReference>
<dbReference type="SMR" id="B1VZW7"/>
<dbReference type="KEGG" id="sgr:SGR_2027"/>
<dbReference type="eggNOG" id="COG0482">
    <property type="taxonomic scope" value="Bacteria"/>
</dbReference>
<dbReference type="HOGENOM" id="CLU_035188_0_2_11"/>
<dbReference type="Proteomes" id="UP000001685">
    <property type="component" value="Chromosome"/>
</dbReference>
<dbReference type="GO" id="GO:0005737">
    <property type="term" value="C:cytoplasm"/>
    <property type="evidence" value="ECO:0007669"/>
    <property type="project" value="UniProtKB-SubCell"/>
</dbReference>
<dbReference type="GO" id="GO:0005524">
    <property type="term" value="F:ATP binding"/>
    <property type="evidence" value="ECO:0007669"/>
    <property type="project" value="UniProtKB-KW"/>
</dbReference>
<dbReference type="GO" id="GO:0000049">
    <property type="term" value="F:tRNA binding"/>
    <property type="evidence" value="ECO:0007669"/>
    <property type="project" value="UniProtKB-KW"/>
</dbReference>
<dbReference type="GO" id="GO:0103016">
    <property type="term" value="F:tRNA-uridine 2-sulfurtransferase activity"/>
    <property type="evidence" value="ECO:0007669"/>
    <property type="project" value="UniProtKB-EC"/>
</dbReference>
<dbReference type="GO" id="GO:0002143">
    <property type="term" value="P:tRNA wobble position uridine thiolation"/>
    <property type="evidence" value="ECO:0007669"/>
    <property type="project" value="TreeGrafter"/>
</dbReference>
<dbReference type="CDD" id="cd01998">
    <property type="entry name" value="MnmA_TRMU-like"/>
    <property type="match status" value="1"/>
</dbReference>
<dbReference type="FunFam" id="2.30.30.280:FF:000001">
    <property type="entry name" value="tRNA-specific 2-thiouridylase MnmA"/>
    <property type="match status" value="1"/>
</dbReference>
<dbReference type="FunFam" id="2.40.30.10:FF:000096">
    <property type="entry name" value="tRNA-specific 2-thiouridylase MnmA"/>
    <property type="match status" value="1"/>
</dbReference>
<dbReference type="FunFam" id="3.40.50.620:FF:000057">
    <property type="entry name" value="tRNA-specific 2-thiouridylase MnmA"/>
    <property type="match status" value="1"/>
</dbReference>
<dbReference type="Gene3D" id="2.30.30.280">
    <property type="entry name" value="Adenine nucleotide alpha hydrolases-like domains"/>
    <property type="match status" value="1"/>
</dbReference>
<dbReference type="Gene3D" id="3.40.50.620">
    <property type="entry name" value="HUPs"/>
    <property type="match status" value="1"/>
</dbReference>
<dbReference type="Gene3D" id="2.40.30.10">
    <property type="entry name" value="Translation factors"/>
    <property type="match status" value="1"/>
</dbReference>
<dbReference type="HAMAP" id="MF_00144">
    <property type="entry name" value="tRNA_thiouridyl_MnmA"/>
    <property type="match status" value="1"/>
</dbReference>
<dbReference type="InterPro" id="IPR004506">
    <property type="entry name" value="MnmA-like"/>
</dbReference>
<dbReference type="InterPro" id="IPR046885">
    <property type="entry name" value="MnmA-like_C"/>
</dbReference>
<dbReference type="InterPro" id="IPR046884">
    <property type="entry name" value="MnmA-like_central"/>
</dbReference>
<dbReference type="InterPro" id="IPR023382">
    <property type="entry name" value="MnmA-like_central_sf"/>
</dbReference>
<dbReference type="InterPro" id="IPR014729">
    <property type="entry name" value="Rossmann-like_a/b/a_fold"/>
</dbReference>
<dbReference type="NCBIfam" id="NF001138">
    <property type="entry name" value="PRK00143.1"/>
    <property type="match status" value="1"/>
</dbReference>
<dbReference type="NCBIfam" id="TIGR00420">
    <property type="entry name" value="trmU"/>
    <property type="match status" value="1"/>
</dbReference>
<dbReference type="PANTHER" id="PTHR11933:SF5">
    <property type="entry name" value="MITOCHONDRIAL TRNA-SPECIFIC 2-THIOURIDYLASE 1"/>
    <property type="match status" value="1"/>
</dbReference>
<dbReference type="PANTHER" id="PTHR11933">
    <property type="entry name" value="TRNA 5-METHYLAMINOMETHYL-2-THIOURIDYLATE -METHYLTRANSFERASE"/>
    <property type="match status" value="1"/>
</dbReference>
<dbReference type="Pfam" id="PF03054">
    <property type="entry name" value="tRNA_Me_trans"/>
    <property type="match status" value="1"/>
</dbReference>
<dbReference type="Pfam" id="PF20258">
    <property type="entry name" value="tRNA_Me_trans_C"/>
    <property type="match status" value="1"/>
</dbReference>
<dbReference type="Pfam" id="PF20259">
    <property type="entry name" value="tRNA_Me_trans_M"/>
    <property type="match status" value="1"/>
</dbReference>
<dbReference type="SUPFAM" id="SSF52402">
    <property type="entry name" value="Adenine nucleotide alpha hydrolases-like"/>
    <property type="match status" value="1"/>
</dbReference>
<proteinExistence type="inferred from homology"/>
<evidence type="ECO:0000255" key="1">
    <source>
        <dbReference type="HAMAP-Rule" id="MF_00144"/>
    </source>
</evidence>
<accession>B1VZW7</accession>
<protein>
    <recommendedName>
        <fullName evidence="1">tRNA-specific 2-thiouridylase MnmA</fullName>
        <ecNumber evidence="1">2.8.1.13</ecNumber>
    </recommendedName>
</protein>
<organism>
    <name type="scientific">Streptomyces griseus subsp. griseus (strain JCM 4626 / CBS 651.72 / NBRC 13350 / KCC S-0626 / ISP 5235)</name>
    <dbReference type="NCBI Taxonomy" id="455632"/>
    <lineage>
        <taxon>Bacteria</taxon>
        <taxon>Bacillati</taxon>
        <taxon>Actinomycetota</taxon>
        <taxon>Actinomycetes</taxon>
        <taxon>Kitasatosporales</taxon>
        <taxon>Streptomycetaceae</taxon>
        <taxon>Streptomyces</taxon>
    </lineage>
</organism>
<keyword id="KW-0067">ATP-binding</keyword>
<keyword id="KW-0963">Cytoplasm</keyword>
<keyword id="KW-1015">Disulfide bond</keyword>
<keyword id="KW-0547">Nucleotide-binding</keyword>
<keyword id="KW-0694">RNA-binding</keyword>
<keyword id="KW-0808">Transferase</keyword>
<keyword id="KW-0819">tRNA processing</keyword>
<keyword id="KW-0820">tRNA-binding</keyword>
<reference key="1">
    <citation type="journal article" date="2008" name="J. Bacteriol.">
        <title>Genome sequence of the streptomycin-producing microorganism Streptomyces griseus IFO 13350.</title>
        <authorList>
            <person name="Ohnishi Y."/>
            <person name="Ishikawa J."/>
            <person name="Hara H."/>
            <person name="Suzuki H."/>
            <person name="Ikenoya M."/>
            <person name="Ikeda H."/>
            <person name="Yamashita A."/>
            <person name="Hattori M."/>
            <person name="Horinouchi S."/>
        </authorList>
    </citation>
    <scope>NUCLEOTIDE SEQUENCE [LARGE SCALE GENOMIC DNA]</scope>
    <source>
        <strain>JCM 4626 / CBS 651.72 / NBRC 13350 / KCC S-0626 / ISP 5235</strain>
    </source>
</reference>
<comment type="function">
    <text evidence="1">Catalyzes the 2-thiolation of uridine at the wobble position (U34) of tRNA, leading to the formation of s(2)U34.</text>
</comment>
<comment type="catalytic activity">
    <reaction evidence="1">
        <text>S-sulfanyl-L-cysteinyl-[protein] + uridine(34) in tRNA + AH2 + ATP = 2-thiouridine(34) in tRNA + L-cysteinyl-[protein] + A + AMP + diphosphate + H(+)</text>
        <dbReference type="Rhea" id="RHEA:47032"/>
        <dbReference type="Rhea" id="RHEA-COMP:10131"/>
        <dbReference type="Rhea" id="RHEA-COMP:11726"/>
        <dbReference type="Rhea" id="RHEA-COMP:11727"/>
        <dbReference type="Rhea" id="RHEA-COMP:11728"/>
        <dbReference type="ChEBI" id="CHEBI:13193"/>
        <dbReference type="ChEBI" id="CHEBI:15378"/>
        <dbReference type="ChEBI" id="CHEBI:17499"/>
        <dbReference type="ChEBI" id="CHEBI:29950"/>
        <dbReference type="ChEBI" id="CHEBI:30616"/>
        <dbReference type="ChEBI" id="CHEBI:33019"/>
        <dbReference type="ChEBI" id="CHEBI:61963"/>
        <dbReference type="ChEBI" id="CHEBI:65315"/>
        <dbReference type="ChEBI" id="CHEBI:87170"/>
        <dbReference type="ChEBI" id="CHEBI:456215"/>
        <dbReference type="EC" id="2.8.1.13"/>
    </reaction>
</comment>
<comment type="subcellular location">
    <subcellularLocation>
        <location evidence="1">Cytoplasm</location>
    </subcellularLocation>
</comment>
<comment type="similarity">
    <text evidence="1">Belongs to the MnmA/TRMU family.</text>
</comment>
<gene>
    <name evidence="1" type="primary">mnmA</name>
    <name type="ordered locus">SGR_2027</name>
</gene>
<feature type="chain" id="PRO_0000349818" description="tRNA-specific 2-thiouridylase MnmA">
    <location>
        <begin position="1"/>
        <end position="378"/>
    </location>
</feature>
<feature type="region of interest" description="Interaction with tRNA" evidence="1">
    <location>
        <begin position="156"/>
        <end position="158"/>
    </location>
</feature>
<feature type="active site" description="Nucleophile" evidence="1">
    <location>
        <position position="109"/>
    </location>
</feature>
<feature type="active site" description="Cysteine persulfide intermediate" evidence="1">
    <location>
        <position position="208"/>
    </location>
</feature>
<feature type="binding site" evidence="1">
    <location>
        <begin position="14"/>
        <end position="21"/>
    </location>
    <ligand>
        <name>ATP</name>
        <dbReference type="ChEBI" id="CHEBI:30616"/>
    </ligand>
</feature>
<feature type="binding site" evidence="1">
    <location>
        <position position="40"/>
    </location>
    <ligand>
        <name>ATP</name>
        <dbReference type="ChEBI" id="CHEBI:30616"/>
    </ligand>
</feature>
<feature type="binding site" evidence="1">
    <location>
        <position position="133"/>
    </location>
    <ligand>
        <name>ATP</name>
        <dbReference type="ChEBI" id="CHEBI:30616"/>
    </ligand>
</feature>
<feature type="site" description="Interaction with tRNA" evidence="1">
    <location>
        <position position="134"/>
    </location>
</feature>
<feature type="site" description="Interaction with tRNA" evidence="1">
    <location>
        <position position="349"/>
    </location>
</feature>
<feature type="disulfide bond" description="Alternate" evidence="1">
    <location>
        <begin position="109"/>
        <end position="208"/>
    </location>
</feature>